<gene>
    <name evidence="1" type="primary">kdpA</name>
    <name type="ordered locus">BAA_0847</name>
</gene>
<dbReference type="EMBL" id="CP001598">
    <property type="protein sequence ID" value="ACQ45995.1"/>
    <property type="molecule type" value="Genomic_DNA"/>
</dbReference>
<dbReference type="RefSeq" id="WP_000638344.1">
    <property type="nucleotide sequence ID" value="NC_012659.1"/>
</dbReference>
<dbReference type="SMR" id="C3P0L9"/>
<dbReference type="GeneID" id="45020818"/>
<dbReference type="KEGG" id="bai:BAA_0847"/>
<dbReference type="HOGENOM" id="CLU_018614_3_0_9"/>
<dbReference type="GO" id="GO:0005886">
    <property type="term" value="C:plasma membrane"/>
    <property type="evidence" value="ECO:0007669"/>
    <property type="project" value="UniProtKB-SubCell"/>
</dbReference>
<dbReference type="GO" id="GO:0008556">
    <property type="term" value="F:P-type potassium transmembrane transporter activity"/>
    <property type="evidence" value="ECO:0007669"/>
    <property type="project" value="InterPro"/>
</dbReference>
<dbReference type="GO" id="GO:0030955">
    <property type="term" value="F:potassium ion binding"/>
    <property type="evidence" value="ECO:0007669"/>
    <property type="project" value="UniProtKB-UniRule"/>
</dbReference>
<dbReference type="HAMAP" id="MF_00275">
    <property type="entry name" value="KdpA"/>
    <property type="match status" value="1"/>
</dbReference>
<dbReference type="InterPro" id="IPR004623">
    <property type="entry name" value="KdpA"/>
</dbReference>
<dbReference type="NCBIfam" id="TIGR00680">
    <property type="entry name" value="kdpA"/>
    <property type="match status" value="1"/>
</dbReference>
<dbReference type="PANTHER" id="PTHR30607">
    <property type="entry name" value="POTASSIUM-TRANSPORTING ATPASE A CHAIN"/>
    <property type="match status" value="1"/>
</dbReference>
<dbReference type="PANTHER" id="PTHR30607:SF2">
    <property type="entry name" value="POTASSIUM-TRANSPORTING ATPASE POTASSIUM-BINDING SUBUNIT"/>
    <property type="match status" value="1"/>
</dbReference>
<dbReference type="Pfam" id="PF03814">
    <property type="entry name" value="KdpA"/>
    <property type="match status" value="1"/>
</dbReference>
<dbReference type="PIRSF" id="PIRSF001294">
    <property type="entry name" value="K_ATPaseA"/>
    <property type="match status" value="1"/>
</dbReference>
<accession>C3P0L9</accession>
<feature type="chain" id="PRO_1000190729" description="Potassium-transporting ATPase potassium-binding subunit">
    <location>
        <begin position="1"/>
        <end position="555"/>
    </location>
</feature>
<feature type="transmembrane region" description="Helical" evidence="1">
    <location>
        <begin position="2"/>
        <end position="22"/>
    </location>
</feature>
<feature type="transmembrane region" description="Helical" evidence="1">
    <location>
        <begin position="60"/>
        <end position="80"/>
    </location>
</feature>
<feature type="transmembrane region" description="Helical" evidence="1">
    <location>
        <begin position="130"/>
        <end position="150"/>
    </location>
</feature>
<feature type="transmembrane region" description="Helical" evidence="1">
    <location>
        <begin position="173"/>
        <end position="193"/>
    </location>
</feature>
<feature type="transmembrane region" description="Helical" evidence="1">
    <location>
        <begin position="246"/>
        <end position="266"/>
    </location>
</feature>
<feature type="transmembrane region" description="Helical" evidence="1">
    <location>
        <begin position="278"/>
        <end position="298"/>
    </location>
</feature>
<feature type="transmembrane region" description="Helical" evidence="1">
    <location>
        <begin position="374"/>
        <end position="394"/>
    </location>
</feature>
<feature type="transmembrane region" description="Helical" evidence="1">
    <location>
        <begin position="412"/>
        <end position="432"/>
    </location>
</feature>
<feature type="transmembrane region" description="Helical" evidence="1">
    <location>
        <begin position="483"/>
        <end position="503"/>
    </location>
</feature>
<feature type="transmembrane region" description="Helical" evidence="1">
    <location>
        <begin position="525"/>
        <end position="545"/>
    </location>
</feature>
<reference key="1">
    <citation type="submission" date="2009-04" db="EMBL/GenBank/DDBJ databases">
        <title>Genome sequence of Bacillus anthracis A0248.</title>
        <authorList>
            <person name="Dodson R.J."/>
            <person name="Munk A.C."/>
            <person name="Bruce D."/>
            <person name="Detter C."/>
            <person name="Tapia R."/>
            <person name="Sutton G."/>
            <person name="Sims D."/>
            <person name="Brettin T."/>
        </authorList>
    </citation>
    <scope>NUCLEOTIDE SEQUENCE [LARGE SCALE GENOMIC DNA]</scope>
    <source>
        <strain>A0248</strain>
    </source>
</reference>
<keyword id="KW-1003">Cell membrane</keyword>
<keyword id="KW-0406">Ion transport</keyword>
<keyword id="KW-0472">Membrane</keyword>
<keyword id="KW-0630">Potassium</keyword>
<keyword id="KW-0633">Potassium transport</keyword>
<keyword id="KW-0812">Transmembrane</keyword>
<keyword id="KW-1133">Transmembrane helix</keyword>
<keyword id="KW-0813">Transport</keyword>
<name>KDPA_BACAA</name>
<protein>
    <recommendedName>
        <fullName evidence="1">Potassium-transporting ATPase potassium-binding subunit</fullName>
    </recommendedName>
    <alternativeName>
        <fullName evidence="1">ATP phosphohydrolase [potassium-transporting] A chain</fullName>
    </alternativeName>
    <alternativeName>
        <fullName evidence="1">Potassium-binding and translocating subunit A</fullName>
    </alternativeName>
    <alternativeName>
        <fullName evidence="1">Potassium-translocating ATPase A chain</fullName>
    </alternativeName>
</protein>
<sequence length="555" mass="59761">MIWVAVVITMLLFILVAKPTGIYLEKAFQGSKKLDKVFGPFEKLIFKITGVKEYNQTWKQYALSLVLLNGFMIVVVYFIFRLQGVLPLNPAHIEGMEPTLAFNTAISFMADTNLQHYSGENGLSYLSQLIGITFLMFAAPATTLALVMAFIRGLAGKELGNFFIDFTRALTRVFLPIAFMAALVFVALGVPQTLDGAVTAQTIDGAKQSILRGPVASFVAIKELGNNGGGFFGANSTHPFENPGQMSNILQMMLMMLLPTALPFTYGRMVGNKKQGRILFVSLFMVFLLGFITITTSELNGNPALNAMGIEHVQGSTEGKEVRFGTVFSSLYATVTTAAETGAVNTMHDTLTPIGGLVPLVNMMLNTVYGGVGAGFVNIIMYAIIAVFISGLMVGRTPEFLGKKIEGKEMKLIAVTILFHPLLILGFSALALSTSLGTDAISHSGFHGLTQVVYEYTSSAANNGSGFEGLGDNTPFWNITTGLVMFLGRYFSLITMLAVAASLKEKTVVPETVGTFRTDNGLFGGIFIGTIVIVGALTFFPMLVLGPIAEFLTLK</sequence>
<organism>
    <name type="scientific">Bacillus anthracis (strain A0248)</name>
    <dbReference type="NCBI Taxonomy" id="592021"/>
    <lineage>
        <taxon>Bacteria</taxon>
        <taxon>Bacillati</taxon>
        <taxon>Bacillota</taxon>
        <taxon>Bacilli</taxon>
        <taxon>Bacillales</taxon>
        <taxon>Bacillaceae</taxon>
        <taxon>Bacillus</taxon>
        <taxon>Bacillus cereus group</taxon>
    </lineage>
</organism>
<evidence type="ECO:0000255" key="1">
    <source>
        <dbReference type="HAMAP-Rule" id="MF_00275"/>
    </source>
</evidence>
<comment type="function">
    <text evidence="1">Part of the high-affinity ATP-driven potassium transport (or Kdp) system, which catalyzes the hydrolysis of ATP coupled with the electrogenic transport of potassium into the cytoplasm. This subunit binds the extracellular potassium ions and delivers the ions to the membrane domain of KdpB through an intramembrane tunnel.</text>
</comment>
<comment type="subunit">
    <text evidence="1">The system is composed of three essential subunits: KdpA, KdpB and KdpC.</text>
</comment>
<comment type="subcellular location">
    <subcellularLocation>
        <location evidence="1">Cell membrane</location>
        <topology evidence="1">Multi-pass membrane protein</topology>
    </subcellularLocation>
</comment>
<comment type="similarity">
    <text evidence="1">Belongs to the KdpA family.</text>
</comment>
<proteinExistence type="inferred from homology"/>